<keyword id="KW-1003">Cell membrane</keyword>
<keyword id="KW-0966">Cell projection</keyword>
<keyword id="KW-1015">Disulfide bond</keyword>
<keyword id="KW-0325">Glycoprotein</keyword>
<keyword id="KW-0393">Immunoglobulin domain</keyword>
<keyword id="KW-0406">Ion transport</keyword>
<keyword id="KW-0472">Membrane</keyword>
<keyword id="KW-1185">Reference proteome</keyword>
<keyword id="KW-0732">Signal</keyword>
<keyword id="KW-0915">Sodium</keyword>
<keyword id="KW-0739">Sodium transport</keyword>
<keyword id="KW-0812">Transmembrane</keyword>
<keyword id="KW-1133">Transmembrane helix</keyword>
<keyword id="KW-0813">Transport</keyword>
<accession>Q4PPC4</accession>
<organism>
    <name type="scientific">Canis lupus familiaris</name>
    <name type="common">Dog</name>
    <name type="synonym">Canis familiaris</name>
    <dbReference type="NCBI Taxonomy" id="9615"/>
    <lineage>
        <taxon>Eukaryota</taxon>
        <taxon>Metazoa</taxon>
        <taxon>Chordata</taxon>
        <taxon>Craniata</taxon>
        <taxon>Vertebrata</taxon>
        <taxon>Euteleostomi</taxon>
        <taxon>Mammalia</taxon>
        <taxon>Eutheria</taxon>
        <taxon>Laurasiatheria</taxon>
        <taxon>Carnivora</taxon>
        <taxon>Caniformia</taxon>
        <taxon>Canidae</taxon>
        <taxon>Canis</taxon>
    </lineage>
</organism>
<reference key="1">
    <citation type="submission" date="2005-05" db="EMBL/GenBank/DDBJ databases">
        <title>Cloning of dog cardiac sodium channel beta-1 subunit.</title>
        <authorList>
            <person name="Mishra S."/>
            <person name="Sabbah H.N."/>
            <person name="Undrovinas N.A."/>
            <person name="Undrovinas A.I."/>
        </authorList>
    </citation>
    <scope>NUCLEOTIDE SEQUENCE [MRNA]</scope>
</reference>
<comment type="function">
    <text evidence="3">Regulatory subunit of multiple voltage-gated sodium (Nav) channels directly mediating the depolarization of excitable membranes. Navs, also called VGSCs (voltage-gated sodium channels) or VDSCs (voltage-dependent sodium channels), operate by switching between closed and open conformations depending on the voltage difference across the membrane. In the open conformation they allow Na(+) ions to selectively pass through the pore, along their electrochemical gradient. The influx of Na+ ions provokes membrane depolarization, initiating the propagation of electrical signals throughout cells and tissues. The accessory beta subunits participate in localization and functional modulation of the Nav channels. Modulates the activity of SCN1A/Nav1.1, SCN2A/Nav1.2, SCN3A/Nav1.3, SCN4A/Nav1.4, SCN5A/Nav1.5, SCN8A/Nav1.6, SCN9A/Nav1.7 and SCN10A/Nav1.8.</text>
</comment>
<comment type="subunit">
    <text evidence="1 2 3">A voltage-gated sodium (Nav) channel consists of an ion-conducting pore-forming alpha subunit functional on its own that is regulated by one or more beta subunits. Interacts with SCN1A; regulatory subunit of SCN1A/Nav1.1. Interacts with SCN3A; regulatory subunit of SCN3A/Nav1.3. Interacts with SCN4A; regulatory subunit of SCN4A/Nav1.4. Interacts with SCN5A; regulatory subunit of SCN5A/Nav1.5. Interacts with SCN8A; regulatory subunit of SCN8A/Nav1.6 (By similarity). Interacts with SCN9A; regulatory subunit of SCN9A/Nav1.7 (By similarity). Interacts with SCN10A; regulatory subunit of SCN10A/Nav1.8 (By similarity). Interacts with NFASC (By similarity). Interacts with TMEM65 (By similarity).</text>
</comment>
<comment type="subcellular location">
    <subcellularLocation>
        <location evidence="1">Cell membrane</location>
        <topology evidence="3">Single-pass type I membrane protein</topology>
    </subcellularLocation>
    <subcellularLocation>
        <location evidence="1">Perikaryon</location>
    </subcellularLocation>
    <subcellularLocation>
        <location evidence="1">Cell projection</location>
    </subcellularLocation>
    <subcellularLocation>
        <location evidence="2">Cell projection</location>
        <location evidence="2">Axon</location>
    </subcellularLocation>
    <text evidence="1">Detected at nodes of Ranvier on the sciatic nerve.</text>
</comment>
<comment type="similarity">
    <text evidence="5">Belongs to the sodium channel auxiliary subunit SCN1B (TC 8.A.17) family.</text>
</comment>
<sequence length="218" mass="24678">MGTLLALVVGAALVSSAWGGCVEVDSETEAVYGMTFKILCISCKRRSETTAETFTEWTFRQKGTEEFVKILRYENEVLQLEEDERFEGRVVWNGSRGTKDLQDLSIFITNVTYNHSGDYECHVYRLLFFENYEHNTSVVKKIHIEVVDKANRDMASIVSEIMMYVLIVVLTIWLVAEMVYCYKKIAAATEAAAQENASEYLAITSESKENCTGVQVAE</sequence>
<gene>
    <name evidence="3" type="primary">SCN1B</name>
</gene>
<dbReference type="EMBL" id="DQ061859">
    <property type="protein sequence ID" value="AAY59601.1"/>
    <property type="molecule type" value="mRNA"/>
</dbReference>
<dbReference type="RefSeq" id="NP_001020569.1">
    <property type="nucleotide sequence ID" value="NM_001025398.2"/>
</dbReference>
<dbReference type="SMR" id="Q4PPC4"/>
<dbReference type="FunCoup" id="Q4PPC4">
    <property type="interactions" value="105"/>
</dbReference>
<dbReference type="STRING" id="9615.ENSCAFP00000010590"/>
<dbReference type="GlyCosmos" id="Q4PPC4">
    <property type="glycosylation" value="4 sites, No reported glycans"/>
</dbReference>
<dbReference type="PaxDb" id="9612-ENSCAFP00000010590"/>
<dbReference type="Ensembl" id="ENSCAFT00000082522.2">
    <property type="protein sequence ID" value="ENSCAFP00000059779.2"/>
    <property type="gene ID" value="ENSCAFG00000007129.5"/>
</dbReference>
<dbReference type="Ensembl" id="ENSCAFT00030003695.1">
    <property type="protein sequence ID" value="ENSCAFP00030003277.1"/>
    <property type="gene ID" value="ENSCAFG00030002018.1"/>
</dbReference>
<dbReference type="Ensembl" id="ENSCAFT00040005243.1">
    <property type="protein sequence ID" value="ENSCAFP00040004509.1"/>
    <property type="gene ID" value="ENSCAFG00040002747.1"/>
</dbReference>
<dbReference type="Ensembl" id="ENSCAFT00845006880.1">
    <property type="protein sequence ID" value="ENSCAFP00845005479.1"/>
    <property type="gene ID" value="ENSCAFG00845003824.1"/>
</dbReference>
<dbReference type="GeneID" id="484584"/>
<dbReference type="KEGG" id="cfa:484584"/>
<dbReference type="CTD" id="6324"/>
<dbReference type="VEuPathDB" id="HostDB:ENSCAFG00845003824"/>
<dbReference type="VGNC" id="VGNC:45916">
    <property type="gene designation" value="SCN1B"/>
</dbReference>
<dbReference type="eggNOG" id="ENOG502R0UM">
    <property type="taxonomic scope" value="Eukaryota"/>
</dbReference>
<dbReference type="GeneTree" id="ENSGT00390000018560"/>
<dbReference type="InParanoid" id="Q4PPC4"/>
<dbReference type="OrthoDB" id="8868224at2759"/>
<dbReference type="Proteomes" id="UP000002254">
    <property type="component" value="Chromosome 1"/>
</dbReference>
<dbReference type="Proteomes" id="UP000694429">
    <property type="component" value="Chromosome 1"/>
</dbReference>
<dbReference type="Proteomes" id="UP000694542">
    <property type="component" value="Chromosome 1"/>
</dbReference>
<dbReference type="Proteomes" id="UP000805418">
    <property type="component" value="Chromosome 1"/>
</dbReference>
<dbReference type="GO" id="GO:0030424">
    <property type="term" value="C:axon"/>
    <property type="evidence" value="ECO:0007669"/>
    <property type="project" value="UniProtKB-SubCell"/>
</dbReference>
<dbReference type="GO" id="GO:0043204">
    <property type="term" value="C:perikaryon"/>
    <property type="evidence" value="ECO:0007669"/>
    <property type="project" value="UniProtKB-SubCell"/>
</dbReference>
<dbReference type="GO" id="GO:0005886">
    <property type="term" value="C:plasma membrane"/>
    <property type="evidence" value="ECO:0000250"/>
    <property type="project" value="UniProtKB"/>
</dbReference>
<dbReference type="GO" id="GO:0001518">
    <property type="term" value="C:voltage-gated sodium channel complex"/>
    <property type="evidence" value="ECO:0000250"/>
    <property type="project" value="UniProtKB"/>
</dbReference>
<dbReference type="GO" id="GO:0017080">
    <property type="term" value="F:sodium channel regulator activity"/>
    <property type="evidence" value="ECO:0000250"/>
    <property type="project" value="UniProtKB"/>
</dbReference>
<dbReference type="GO" id="GO:1905152">
    <property type="term" value="P:positive regulation of voltage-gated sodium channel activity"/>
    <property type="evidence" value="ECO:0000250"/>
    <property type="project" value="UniProtKB"/>
</dbReference>
<dbReference type="GO" id="GO:0006814">
    <property type="term" value="P:sodium ion transport"/>
    <property type="evidence" value="ECO:0007669"/>
    <property type="project" value="UniProtKB-KW"/>
</dbReference>
<dbReference type="FunFam" id="2.60.40.10:FF:000581">
    <property type="entry name" value="sodium channel subunit beta-1"/>
    <property type="match status" value="1"/>
</dbReference>
<dbReference type="Gene3D" id="2.60.40.10">
    <property type="entry name" value="Immunoglobulins"/>
    <property type="match status" value="1"/>
</dbReference>
<dbReference type="InterPro" id="IPR036179">
    <property type="entry name" value="Ig-like_dom_sf"/>
</dbReference>
<dbReference type="InterPro" id="IPR013783">
    <property type="entry name" value="Ig-like_fold"/>
</dbReference>
<dbReference type="InterPro" id="IPR013106">
    <property type="entry name" value="Ig_V-set"/>
</dbReference>
<dbReference type="InterPro" id="IPR027098">
    <property type="entry name" value="Na_channel_b1/b3"/>
</dbReference>
<dbReference type="PANTHER" id="PTHR10546:SF2">
    <property type="entry name" value="SODIUM CHANNEL SUBUNIT BETA-1"/>
    <property type="match status" value="1"/>
</dbReference>
<dbReference type="PANTHER" id="PTHR10546">
    <property type="entry name" value="SODIUM CHANNEL SUBUNIT BETA-1 AND 3"/>
    <property type="match status" value="1"/>
</dbReference>
<dbReference type="Pfam" id="PF07686">
    <property type="entry name" value="V-set"/>
    <property type="match status" value="1"/>
</dbReference>
<dbReference type="SUPFAM" id="SSF48726">
    <property type="entry name" value="Immunoglobulin"/>
    <property type="match status" value="1"/>
</dbReference>
<protein>
    <recommendedName>
        <fullName evidence="3">Sodium channel regulatory subunit beta-1</fullName>
    </recommendedName>
</protein>
<proteinExistence type="evidence at transcript level"/>
<feature type="signal peptide" evidence="2">
    <location>
        <begin position="1"/>
        <end position="18"/>
    </location>
</feature>
<feature type="chain" id="PRO_0000309743" description="Sodium channel regulatory subunit beta-1">
    <location>
        <begin position="19"/>
        <end position="218"/>
    </location>
</feature>
<feature type="topological domain" description="Extracellular" evidence="5">
    <location>
        <begin position="19"/>
        <end position="157"/>
    </location>
</feature>
<feature type="transmembrane region" description="Helical" evidence="3">
    <location>
        <begin position="158"/>
        <end position="179"/>
    </location>
</feature>
<feature type="topological domain" description="Cytoplasmic" evidence="5">
    <location>
        <begin position="180"/>
        <end position="218"/>
    </location>
</feature>
<feature type="domain" description="Ig-like C2-type">
    <location>
        <begin position="22"/>
        <end position="150"/>
    </location>
</feature>
<feature type="glycosylation site" description="N-linked (GlcNAc...) asparagine" evidence="4">
    <location>
        <position position="93"/>
    </location>
</feature>
<feature type="glycosylation site" description="N-linked (GlcNAc...) asparagine" evidence="4">
    <location>
        <position position="110"/>
    </location>
</feature>
<feature type="glycosylation site" description="N-linked (GlcNAc...) asparagine" evidence="4">
    <location>
        <position position="114"/>
    </location>
</feature>
<feature type="glycosylation site" description="N-linked (GlcNAc...) asparagine" evidence="4">
    <location>
        <position position="135"/>
    </location>
</feature>
<feature type="disulfide bond" evidence="3">
    <location>
        <begin position="21"/>
        <end position="43"/>
    </location>
</feature>
<feature type="disulfide bond" evidence="3">
    <location>
        <begin position="40"/>
        <end position="121"/>
    </location>
</feature>
<evidence type="ECO:0000250" key="1">
    <source>
        <dbReference type="UniProtKB" id="P97952"/>
    </source>
</evidence>
<evidence type="ECO:0000250" key="2">
    <source>
        <dbReference type="UniProtKB" id="Q00954"/>
    </source>
</evidence>
<evidence type="ECO:0000250" key="3">
    <source>
        <dbReference type="UniProtKB" id="Q07699"/>
    </source>
</evidence>
<evidence type="ECO:0000255" key="4"/>
<evidence type="ECO:0000305" key="5"/>
<name>SCN1B_CANLF</name>